<proteinExistence type="inferred from homology"/>
<comment type="function">
    <text evidence="1">Digests double-stranded RNA. Involved in the processing of primary rRNA transcript to yield the immediate precursors to the large and small rRNAs (23S and 16S). Processes some mRNAs, and tRNAs when they are encoded in the rRNA operon. Processes pre-crRNA and tracrRNA of type II CRISPR loci if present in the organism.</text>
</comment>
<comment type="catalytic activity">
    <reaction evidence="1">
        <text>Endonucleolytic cleavage to 5'-phosphomonoester.</text>
        <dbReference type="EC" id="3.1.26.3"/>
    </reaction>
</comment>
<comment type="cofactor">
    <cofactor evidence="1">
        <name>Mg(2+)</name>
        <dbReference type="ChEBI" id="CHEBI:18420"/>
    </cofactor>
</comment>
<comment type="subunit">
    <text evidence="1">Homodimer.</text>
</comment>
<comment type="subcellular location">
    <subcellularLocation>
        <location evidence="1">Cytoplasm</location>
    </subcellularLocation>
</comment>
<comment type="similarity">
    <text evidence="1">Belongs to the ribonuclease III family.</text>
</comment>
<reference key="1">
    <citation type="journal article" date="2000" name="Nature">
        <title>The complete sequence of the mucosal pathogen Ureaplasma urealyticum.</title>
        <authorList>
            <person name="Glass J.I."/>
            <person name="Lefkowitz E.J."/>
            <person name="Glass J.S."/>
            <person name="Heiner C.R."/>
            <person name="Chen E.Y."/>
            <person name="Cassell G.H."/>
        </authorList>
    </citation>
    <scope>NUCLEOTIDE SEQUENCE [LARGE SCALE GENOMIC DNA]</scope>
    <source>
        <strain>ATCC 700970</strain>
    </source>
</reference>
<feature type="chain" id="PRO_0000180451" description="Ribonuclease 3">
    <location>
        <begin position="1"/>
        <end position="236"/>
    </location>
</feature>
<feature type="domain" description="RNase III" evidence="1">
    <location>
        <begin position="6"/>
        <end position="140"/>
    </location>
</feature>
<feature type="domain" description="DRBM" evidence="1">
    <location>
        <begin position="166"/>
        <end position="231"/>
    </location>
</feature>
<feature type="active site" evidence="1">
    <location>
        <position position="50"/>
    </location>
</feature>
<feature type="active site" evidence="1">
    <location>
        <position position="129"/>
    </location>
</feature>
<feature type="binding site" evidence="1">
    <location>
        <position position="46"/>
    </location>
    <ligand>
        <name>Mg(2+)</name>
        <dbReference type="ChEBI" id="CHEBI:18420"/>
    </ligand>
</feature>
<feature type="binding site" evidence="1">
    <location>
        <position position="126"/>
    </location>
    <ligand>
        <name>Mg(2+)</name>
        <dbReference type="ChEBI" id="CHEBI:18420"/>
    </ligand>
</feature>
<feature type="binding site" evidence="1">
    <location>
        <position position="129"/>
    </location>
    <ligand>
        <name>Mg(2+)</name>
        <dbReference type="ChEBI" id="CHEBI:18420"/>
    </ligand>
</feature>
<accession>Q9PQT8</accession>
<gene>
    <name evidence="1" type="primary">rnc</name>
    <name type="ordered locus">UU205</name>
</gene>
<keyword id="KW-0963">Cytoplasm</keyword>
<keyword id="KW-0255">Endonuclease</keyword>
<keyword id="KW-0378">Hydrolase</keyword>
<keyword id="KW-0460">Magnesium</keyword>
<keyword id="KW-0479">Metal-binding</keyword>
<keyword id="KW-0507">mRNA processing</keyword>
<keyword id="KW-0540">Nuclease</keyword>
<keyword id="KW-1185">Reference proteome</keyword>
<keyword id="KW-0694">RNA-binding</keyword>
<keyword id="KW-0698">rRNA processing</keyword>
<keyword id="KW-0699">rRNA-binding</keyword>
<keyword id="KW-0819">tRNA processing</keyword>
<organism>
    <name type="scientific">Ureaplasma parvum serovar 3 (strain ATCC 700970)</name>
    <dbReference type="NCBI Taxonomy" id="273119"/>
    <lineage>
        <taxon>Bacteria</taxon>
        <taxon>Bacillati</taxon>
        <taxon>Mycoplasmatota</taxon>
        <taxon>Mycoplasmoidales</taxon>
        <taxon>Mycoplasmoidaceae</taxon>
        <taxon>Ureaplasma</taxon>
    </lineage>
</organism>
<dbReference type="EC" id="3.1.26.3" evidence="1"/>
<dbReference type="EMBL" id="AF222894">
    <property type="protein sequence ID" value="AAF30612.1"/>
    <property type="molecule type" value="Genomic_DNA"/>
</dbReference>
<dbReference type="RefSeq" id="WP_004025836.1">
    <property type="nucleotide sequence ID" value="NC_002162.1"/>
</dbReference>
<dbReference type="SMR" id="Q9PQT8"/>
<dbReference type="STRING" id="273119.UU205"/>
<dbReference type="EnsemblBacteria" id="AAF30612">
    <property type="protein sequence ID" value="AAF30612"/>
    <property type="gene ID" value="UU205"/>
</dbReference>
<dbReference type="GeneID" id="93848677"/>
<dbReference type="KEGG" id="uur:UU205"/>
<dbReference type="eggNOG" id="COG0571">
    <property type="taxonomic scope" value="Bacteria"/>
</dbReference>
<dbReference type="HOGENOM" id="CLU_000907_1_3_14"/>
<dbReference type="OrthoDB" id="9805026at2"/>
<dbReference type="Proteomes" id="UP000000423">
    <property type="component" value="Chromosome"/>
</dbReference>
<dbReference type="GO" id="GO:0005737">
    <property type="term" value="C:cytoplasm"/>
    <property type="evidence" value="ECO:0007669"/>
    <property type="project" value="UniProtKB-SubCell"/>
</dbReference>
<dbReference type="GO" id="GO:0003725">
    <property type="term" value="F:double-stranded RNA binding"/>
    <property type="evidence" value="ECO:0007669"/>
    <property type="project" value="TreeGrafter"/>
</dbReference>
<dbReference type="GO" id="GO:0046872">
    <property type="term" value="F:metal ion binding"/>
    <property type="evidence" value="ECO:0007669"/>
    <property type="project" value="UniProtKB-KW"/>
</dbReference>
<dbReference type="GO" id="GO:0004525">
    <property type="term" value="F:ribonuclease III activity"/>
    <property type="evidence" value="ECO:0007669"/>
    <property type="project" value="UniProtKB-UniRule"/>
</dbReference>
<dbReference type="GO" id="GO:0019843">
    <property type="term" value="F:rRNA binding"/>
    <property type="evidence" value="ECO:0007669"/>
    <property type="project" value="UniProtKB-KW"/>
</dbReference>
<dbReference type="GO" id="GO:0006397">
    <property type="term" value="P:mRNA processing"/>
    <property type="evidence" value="ECO:0007669"/>
    <property type="project" value="UniProtKB-UniRule"/>
</dbReference>
<dbReference type="GO" id="GO:0010468">
    <property type="term" value="P:regulation of gene expression"/>
    <property type="evidence" value="ECO:0007669"/>
    <property type="project" value="TreeGrafter"/>
</dbReference>
<dbReference type="GO" id="GO:0006364">
    <property type="term" value="P:rRNA processing"/>
    <property type="evidence" value="ECO:0007669"/>
    <property type="project" value="UniProtKB-UniRule"/>
</dbReference>
<dbReference type="GO" id="GO:0008033">
    <property type="term" value="P:tRNA processing"/>
    <property type="evidence" value="ECO:0007669"/>
    <property type="project" value="UniProtKB-KW"/>
</dbReference>
<dbReference type="CDD" id="cd10845">
    <property type="entry name" value="DSRM_RNAse_III_family"/>
    <property type="match status" value="1"/>
</dbReference>
<dbReference type="CDD" id="cd00593">
    <property type="entry name" value="RIBOc"/>
    <property type="match status" value="1"/>
</dbReference>
<dbReference type="Gene3D" id="3.30.160.20">
    <property type="match status" value="1"/>
</dbReference>
<dbReference type="Gene3D" id="1.10.1520.10">
    <property type="entry name" value="Ribonuclease III domain"/>
    <property type="match status" value="1"/>
</dbReference>
<dbReference type="HAMAP" id="MF_00104">
    <property type="entry name" value="RNase_III"/>
    <property type="match status" value="1"/>
</dbReference>
<dbReference type="InterPro" id="IPR014720">
    <property type="entry name" value="dsRBD_dom"/>
</dbReference>
<dbReference type="InterPro" id="IPR011907">
    <property type="entry name" value="RNase_III"/>
</dbReference>
<dbReference type="InterPro" id="IPR000999">
    <property type="entry name" value="RNase_III_dom"/>
</dbReference>
<dbReference type="InterPro" id="IPR036389">
    <property type="entry name" value="RNase_III_sf"/>
</dbReference>
<dbReference type="NCBIfam" id="TIGR02191">
    <property type="entry name" value="RNaseIII"/>
    <property type="match status" value="1"/>
</dbReference>
<dbReference type="PANTHER" id="PTHR11207:SF0">
    <property type="entry name" value="RIBONUCLEASE 3"/>
    <property type="match status" value="1"/>
</dbReference>
<dbReference type="PANTHER" id="PTHR11207">
    <property type="entry name" value="RIBONUCLEASE III"/>
    <property type="match status" value="1"/>
</dbReference>
<dbReference type="Pfam" id="PF00035">
    <property type="entry name" value="dsrm"/>
    <property type="match status" value="1"/>
</dbReference>
<dbReference type="Pfam" id="PF14622">
    <property type="entry name" value="Ribonucleas_3_3"/>
    <property type="match status" value="1"/>
</dbReference>
<dbReference type="SMART" id="SM00358">
    <property type="entry name" value="DSRM"/>
    <property type="match status" value="1"/>
</dbReference>
<dbReference type="SMART" id="SM00535">
    <property type="entry name" value="RIBOc"/>
    <property type="match status" value="1"/>
</dbReference>
<dbReference type="SUPFAM" id="SSF54768">
    <property type="entry name" value="dsRNA-binding domain-like"/>
    <property type="match status" value="1"/>
</dbReference>
<dbReference type="SUPFAM" id="SSF69065">
    <property type="entry name" value="RNase III domain-like"/>
    <property type="match status" value="1"/>
</dbReference>
<dbReference type="PROSITE" id="PS50137">
    <property type="entry name" value="DS_RBD"/>
    <property type="match status" value="1"/>
</dbReference>
<dbReference type="PROSITE" id="PS00517">
    <property type="entry name" value="RNASE_3_1"/>
    <property type="match status" value="1"/>
</dbReference>
<dbReference type="PROSITE" id="PS50142">
    <property type="entry name" value="RNASE_3_2"/>
    <property type="match status" value="1"/>
</dbReference>
<sequence length="236" mass="27570">MDNKKFLDFLKQNRIEPKNLSIYLEALTHKSYANEHKLTKNYQRLEFLGDACVEWVISNFIFNYKIKDNEKMRSLDEGEMTRARSNMVRSEILSYAAKDLGLTDFLMIGVGLEQDQSARMEKIYEDIFEAFIGAVAQDQGIKKVSLILEKTLIKYFREGQINYQKDYKTIFQEQAQRINKKPIMYKLVRNEGDKKEVHLVWNDLIYGIGIASTRKEAEILAAKNAILKLDDYTKKA</sequence>
<protein>
    <recommendedName>
        <fullName evidence="1">Ribonuclease 3</fullName>
        <ecNumber evidence="1">3.1.26.3</ecNumber>
    </recommendedName>
    <alternativeName>
        <fullName evidence="1">Ribonuclease III</fullName>
        <shortName evidence="1">RNase III</shortName>
    </alternativeName>
</protein>
<name>RNC_UREPA</name>
<evidence type="ECO:0000255" key="1">
    <source>
        <dbReference type="HAMAP-Rule" id="MF_00104"/>
    </source>
</evidence>